<keyword id="KW-0067">ATP-binding</keyword>
<keyword id="KW-1003">Cell membrane</keyword>
<keyword id="KW-0472">Membrane</keyword>
<keyword id="KW-0547">Nucleotide-binding</keyword>
<keyword id="KW-0592">Phosphate transport</keyword>
<keyword id="KW-1278">Translocase</keyword>
<keyword id="KW-0813">Transport</keyword>
<accession>P0C560</accession>
<accession>O68469</accession>
<accession>Q7WTY5</accession>
<dbReference type="EC" id="7.3.2.1" evidence="1"/>
<dbReference type="EMBL" id="AY228478">
    <property type="protein sequence ID" value="AAO43114.1"/>
    <property type="molecule type" value="Genomic_DNA"/>
</dbReference>
<dbReference type="RefSeq" id="WP_011730783.1">
    <property type="nucleotide sequence ID" value="NZ_UGQO01000001.1"/>
</dbReference>
<dbReference type="SMR" id="P0C560"/>
<dbReference type="TCDB" id="3.A.1.7.2">
    <property type="family name" value="the atp-binding cassette (abc) superfamily"/>
</dbReference>
<dbReference type="GeneID" id="93460419"/>
<dbReference type="KEGG" id="msh:LI98_28585"/>
<dbReference type="KEGG" id="msn:LI99_28580"/>
<dbReference type="eggNOG" id="COG1117">
    <property type="taxonomic scope" value="Bacteria"/>
</dbReference>
<dbReference type="OMA" id="TMSIYEN"/>
<dbReference type="GO" id="GO:0005886">
    <property type="term" value="C:plasma membrane"/>
    <property type="evidence" value="ECO:0007669"/>
    <property type="project" value="UniProtKB-SubCell"/>
</dbReference>
<dbReference type="GO" id="GO:0005524">
    <property type="term" value="F:ATP binding"/>
    <property type="evidence" value="ECO:0007669"/>
    <property type="project" value="UniProtKB-KW"/>
</dbReference>
<dbReference type="GO" id="GO:0016887">
    <property type="term" value="F:ATP hydrolysis activity"/>
    <property type="evidence" value="ECO:0007669"/>
    <property type="project" value="InterPro"/>
</dbReference>
<dbReference type="GO" id="GO:0015415">
    <property type="term" value="F:ATPase-coupled phosphate ion transmembrane transporter activity"/>
    <property type="evidence" value="ECO:0007669"/>
    <property type="project" value="UniProtKB-EC"/>
</dbReference>
<dbReference type="GO" id="GO:0035435">
    <property type="term" value="P:phosphate ion transmembrane transport"/>
    <property type="evidence" value="ECO:0007669"/>
    <property type="project" value="InterPro"/>
</dbReference>
<dbReference type="CDD" id="cd03260">
    <property type="entry name" value="ABC_PstB_phosphate_transporter"/>
    <property type="match status" value="1"/>
</dbReference>
<dbReference type="FunFam" id="3.40.50.300:FF:000132">
    <property type="entry name" value="Phosphate import ATP-binding protein PstB"/>
    <property type="match status" value="1"/>
</dbReference>
<dbReference type="Gene3D" id="3.40.50.300">
    <property type="entry name" value="P-loop containing nucleotide triphosphate hydrolases"/>
    <property type="match status" value="1"/>
</dbReference>
<dbReference type="InterPro" id="IPR003593">
    <property type="entry name" value="AAA+_ATPase"/>
</dbReference>
<dbReference type="InterPro" id="IPR003439">
    <property type="entry name" value="ABC_transporter-like_ATP-bd"/>
</dbReference>
<dbReference type="InterPro" id="IPR017871">
    <property type="entry name" value="ABC_transporter-like_CS"/>
</dbReference>
<dbReference type="InterPro" id="IPR027417">
    <property type="entry name" value="P-loop_NTPase"/>
</dbReference>
<dbReference type="InterPro" id="IPR005670">
    <property type="entry name" value="PstB-like"/>
</dbReference>
<dbReference type="NCBIfam" id="TIGR00972">
    <property type="entry name" value="3a0107s01c2"/>
    <property type="match status" value="1"/>
</dbReference>
<dbReference type="PANTHER" id="PTHR43423">
    <property type="entry name" value="ABC TRANSPORTER I FAMILY MEMBER 17"/>
    <property type="match status" value="1"/>
</dbReference>
<dbReference type="PANTHER" id="PTHR43423:SF1">
    <property type="entry name" value="ABC TRANSPORTER I FAMILY MEMBER 17"/>
    <property type="match status" value="1"/>
</dbReference>
<dbReference type="Pfam" id="PF00005">
    <property type="entry name" value="ABC_tran"/>
    <property type="match status" value="1"/>
</dbReference>
<dbReference type="SMART" id="SM00382">
    <property type="entry name" value="AAA"/>
    <property type="match status" value="1"/>
</dbReference>
<dbReference type="SUPFAM" id="SSF52540">
    <property type="entry name" value="P-loop containing nucleoside triphosphate hydrolases"/>
    <property type="match status" value="1"/>
</dbReference>
<dbReference type="PROSITE" id="PS00211">
    <property type="entry name" value="ABC_TRANSPORTER_1"/>
    <property type="match status" value="1"/>
</dbReference>
<dbReference type="PROSITE" id="PS50893">
    <property type="entry name" value="ABC_TRANSPORTER_2"/>
    <property type="match status" value="1"/>
</dbReference>
<dbReference type="PROSITE" id="PS51238">
    <property type="entry name" value="PSTB"/>
    <property type="match status" value="1"/>
</dbReference>
<reference key="1">
    <citation type="journal article" date="2003" name="J. Bacteriol.">
        <title>Identification of a regulated alkaline phosphatase, a cell surface-associated lipoprotein, in Mycobacterium smegmatis.</title>
        <authorList>
            <person name="Kriakov J.I."/>
            <person name="Lee S.H."/>
            <person name="Jacobs W.R. Jr."/>
        </authorList>
    </citation>
    <scope>NUCLEOTIDE SEQUENCE [GENOMIC DNA]</scope>
</reference>
<comment type="function">
    <text evidence="1">Part of the ABC transporter complex PstSACB involved in phosphate import. Responsible for energy coupling to the transport system.</text>
</comment>
<comment type="catalytic activity">
    <reaction evidence="1">
        <text>phosphate(out) + ATP + H2O = ADP + 2 phosphate(in) + H(+)</text>
        <dbReference type="Rhea" id="RHEA:24440"/>
        <dbReference type="ChEBI" id="CHEBI:15377"/>
        <dbReference type="ChEBI" id="CHEBI:15378"/>
        <dbReference type="ChEBI" id="CHEBI:30616"/>
        <dbReference type="ChEBI" id="CHEBI:43474"/>
        <dbReference type="ChEBI" id="CHEBI:456216"/>
        <dbReference type="EC" id="7.3.2.1"/>
    </reaction>
</comment>
<comment type="subunit">
    <text evidence="1">The complex is composed of two ATP-binding proteins (PstB), two transmembrane proteins (PstC and PstA) and a solute-binding protein (PstS).</text>
</comment>
<comment type="subcellular location">
    <subcellularLocation>
        <location evidence="1">Cell membrane</location>
        <topology evidence="1">Peripheral membrane protein</topology>
    </subcellularLocation>
</comment>
<comment type="similarity">
    <text evidence="1">Belongs to the ABC transporter superfamily. Phosphate importer (TC 3.A.1.7) family.</text>
</comment>
<proteinExistence type="inferred from homology"/>
<protein>
    <recommendedName>
        <fullName evidence="1">Phosphate import ATP-binding protein PstB</fullName>
        <ecNumber evidence="1">7.3.2.1</ecNumber>
    </recommendedName>
    <alternativeName>
        <fullName evidence="1">ABC phosphate transporter</fullName>
    </alternativeName>
    <alternativeName>
        <fullName evidence="1">Phosphate-transporting ATPase</fullName>
    </alternativeName>
</protein>
<gene>
    <name evidence="1" type="primary">pstB</name>
    <name type="synonym">mtp1</name>
</gene>
<sequence length="258" mass="28101">MAKRLDLKDVNIYYGAFHAVADVSLAVQPRSVTAFIGPSGCGKSTVLRTLNRMHEVIPGARVEGSVLLDGEDIYGPGVDPVGVRKTIGMVFQRPNPFPTMSIRDNVVAGLKLQGVRNKKTLDEVAERSLRGANLWNEVKDRLDKPGGGLSGGQQQRLCIARAIAVQPDVLLMDEPCSALDPISTLAIEDLIATLKLDYTIVIVTHNMQQAARVSDQTAFFNLEATGKPGRLIEIDDTEKIFSNPRQKATEDYISGRFG</sequence>
<organism>
    <name type="scientific">Mycolicibacterium smegmatis</name>
    <name type="common">Mycobacterium smegmatis</name>
    <dbReference type="NCBI Taxonomy" id="1772"/>
    <lineage>
        <taxon>Bacteria</taxon>
        <taxon>Bacillati</taxon>
        <taxon>Actinomycetota</taxon>
        <taxon>Actinomycetes</taxon>
        <taxon>Mycobacteriales</taxon>
        <taxon>Mycobacteriaceae</taxon>
        <taxon>Mycolicibacterium</taxon>
    </lineage>
</organism>
<evidence type="ECO:0000255" key="1">
    <source>
        <dbReference type="HAMAP-Rule" id="MF_01702"/>
    </source>
</evidence>
<name>PSTB_MYCSM</name>
<feature type="chain" id="PRO_0000092848" description="Phosphate import ATP-binding protein PstB">
    <location>
        <begin position="1"/>
        <end position="258"/>
    </location>
</feature>
<feature type="domain" description="ABC transporter" evidence="1">
    <location>
        <begin position="5"/>
        <end position="247"/>
    </location>
</feature>
<feature type="binding site" evidence="1">
    <location>
        <begin position="37"/>
        <end position="44"/>
    </location>
    <ligand>
        <name>ATP</name>
        <dbReference type="ChEBI" id="CHEBI:30616"/>
    </ligand>
</feature>